<dbReference type="EMBL" id="FM209186">
    <property type="protein sequence ID" value="CAW29805.1"/>
    <property type="molecule type" value="Genomic_DNA"/>
</dbReference>
<dbReference type="RefSeq" id="WP_003099290.1">
    <property type="nucleotide sequence ID" value="NC_011770.1"/>
</dbReference>
<dbReference type="SMR" id="B7V0L1"/>
<dbReference type="KEGG" id="pag:PLES_50511"/>
<dbReference type="HOGENOM" id="CLU_036856_0_1_6"/>
<dbReference type="GO" id="GO:0005737">
    <property type="term" value="C:cytoplasm"/>
    <property type="evidence" value="ECO:0007669"/>
    <property type="project" value="UniProtKB-SubCell"/>
</dbReference>
<dbReference type="GO" id="GO:0016149">
    <property type="term" value="F:translation release factor activity, codon specific"/>
    <property type="evidence" value="ECO:0007669"/>
    <property type="project" value="UniProtKB-UniRule"/>
</dbReference>
<dbReference type="FunFam" id="3.30.160.20:FF:000004">
    <property type="entry name" value="Peptide chain release factor 1"/>
    <property type="match status" value="1"/>
</dbReference>
<dbReference type="FunFam" id="3.30.70.1660:FF:000002">
    <property type="entry name" value="Peptide chain release factor 1"/>
    <property type="match status" value="1"/>
</dbReference>
<dbReference type="FunFam" id="3.30.70.1660:FF:000004">
    <property type="entry name" value="Peptide chain release factor 1"/>
    <property type="match status" value="1"/>
</dbReference>
<dbReference type="Gene3D" id="3.30.160.20">
    <property type="match status" value="1"/>
</dbReference>
<dbReference type="Gene3D" id="3.30.70.1660">
    <property type="match status" value="1"/>
</dbReference>
<dbReference type="Gene3D" id="6.10.140.1950">
    <property type="match status" value="1"/>
</dbReference>
<dbReference type="HAMAP" id="MF_00093">
    <property type="entry name" value="Rel_fac_1"/>
    <property type="match status" value="1"/>
</dbReference>
<dbReference type="InterPro" id="IPR005139">
    <property type="entry name" value="PCRF"/>
</dbReference>
<dbReference type="InterPro" id="IPR000352">
    <property type="entry name" value="Pep_chain_release_fac_I"/>
</dbReference>
<dbReference type="InterPro" id="IPR045853">
    <property type="entry name" value="Pep_chain_release_fac_I_sf"/>
</dbReference>
<dbReference type="InterPro" id="IPR050057">
    <property type="entry name" value="Prokaryotic/Mito_RF"/>
</dbReference>
<dbReference type="InterPro" id="IPR004373">
    <property type="entry name" value="RF-1"/>
</dbReference>
<dbReference type="NCBIfam" id="TIGR00019">
    <property type="entry name" value="prfA"/>
    <property type="match status" value="1"/>
</dbReference>
<dbReference type="NCBIfam" id="NF001859">
    <property type="entry name" value="PRK00591.1"/>
    <property type="match status" value="1"/>
</dbReference>
<dbReference type="PANTHER" id="PTHR43804">
    <property type="entry name" value="LD18447P"/>
    <property type="match status" value="1"/>
</dbReference>
<dbReference type="PANTHER" id="PTHR43804:SF7">
    <property type="entry name" value="LD18447P"/>
    <property type="match status" value="1"/>
</dbReference>
<dbReference type="Pfam" id="PF03462">
    <property type="entry name" value="PCRF"/>
    <property type="match status" value="1"/>
</dbReference>
<dbReference type="Pfam" id="PF00472">
    <property type="entry name" value="RF-1"/>
    <property type="match status" value="1"/>
</dbReference>
<dbReference type="SMART" id="SM00937">
    <property type="entry name" value="PCRF"/>
    <property type="match status" value="1"/>
</dbReference>
<dbReference type="SUPFAM" id="SSF75620">
    <property type="entry name" value="Release factor"/>
    <property type="match status" value="1"/>
</dbReference>
<dbReference type="PROSITE" id="PS00745">
    <property type="entry name" value="RF_PROK_I"/>
    <property type="match status" value="1"/>
</dbReference>
<reference key="1">
    <citation type="journal article" date="2009" name="Genome Res.">
        <title>Newly introduced genomic prophage islands are critical determinants of in vivo competitiveness in the Liverpool epidemic strain of Pseudomonas aeruginosa.</title>
        <authorList>
            <person name="Winstanley C."/>
            <person name="Langille M.G.I."/>
            <person name="Fothergill J.L."/>
            <person name="Kukavica-Ibrulj I."/>
            <person name="Paradis-Bleau C."/>
            <person name="Sanschagrin F."/>
            <person name="Thomson N.R."/>
            <person name="Winsor G.L."/>
            <person name="Quail M.A."/>
            <person name="Lennard N."/>
            <person name="Bignell A."/>
            <person name="Clarke L."/>
            <person name="Seeger K."/>
            <person name="Saunders D."/>
            <person name="Harris D."/>
            <person name="Parkhill J."/>
            <person name="Hancock R.E.W."/>
            <person name="Brinkman F.S.L."/>
            <person name="Levesque R.C."/>
        </authorList>
    </citation>
    <scope>NUCLEOTIDE SEQUENCE [LARGE SCALE GENOMIC DNA]</scope>
    <source>
        <strain>LESB58</strain>
    </source>
</reference>
<evidence type="ECO:0000255" key="1">
    <source>
        <dbReference type="HAMAP-Rule" id="MF_00093"/>
    </source>
</evidence>
<organism>
    <name type="scientific">Pseudomonas aeruginosa (strain LESB58)</name>
    <dbReference type="NCBI Taxonomy" id="557722"/>
    <lineage>
        <taxon>Bacteria</taxon>
        <taxon>Pseudomonadati</taxon>
        <taxon>Pseudomonadota</taxon>
        <taxon>Gammaproteobacteria</taxon>
        <taxon>Pseudomonadales</taxon>
        <taxon>Pseudomonadaceae</taxon>
        <taxon>Pseudomonas</taxon>
    </lineage>
</organism>
<comment type="function">
    <text evidence="1">Peptide chain release factor 1 directs the termination of translation in response to the peptide chain termination codons UAG and UAA.</text>
</comment>
<comment type="subcellular location">
    <subcellularLocation>
        <location evidence="1">Cytoplasm</location>
    </subcellularLocation>
</comment>
<comment type="PTM">
    <text evidence="1">Methylated by PrmC. Methylation increases the termination efficiency of RF1.</text>
</comment>
<comment type="similarity">
    <text evidence="1">Belongs to the prokaryotic/mitochondrial release factor family.</text>
</comment>
<protein>
    <recommendedName>
        <fullName evidence="1">Peptide chain release factor 1</fullName>
        <shortName evidence="1">RF-1</shortName>
    </recommendedName>
</protein>
<sequence length="360" mass="40027">MKASLLKKLDVLSDRYEELTALLGDAEVISDQTRFRAYSREYAEVEPVILAFRDYRKVQADLEGAQALLKDSDPELRDLAEEEVAEARGRLAALGDSLQRMLLPKDPNDSRNVFLEIRAGTGGDEAAIFSGDLFRMYSRYAERQGWRVETLSENEGEHGGYKEVIARVEGDNVYAKLKFESGAHRVQRVPETESQGRIHTSACTVAVLPEPDEQAAIEINPADLRVDTYRSSGAGGQHVNKTDSAVRITHIPSGIVVECQEERSQHKNRAKAMAWLAAKLNDQQQAAAQQAIASTRKLLVGSGDRSERIRTYNFPQGRVTDHRINLTLYSLGEVMEGAVEQVIEPLLQEYQADQLAALGD</sequence>
<keyword id="KW-0963">Cytoplasm</keyword>
<keyword id="KW-0488">Methylation</keyword>
<keyword id="KW-0648">Protein biosynthesis</keyword>
<feature type="chain" id="PRO_1000117252" description="Peptide chain release factor 1">
    <location>
        <begin position="1"/>
        <end position="360"/>
    </location>
</feature>
<feature type="modified residue" description="N5-methylglutamine" evidence="1">
    <location>
        <position position="237"/>
    </location>
</feature>
<gene>
    <name evidence="1" type="primary">prfA</name>
    <name type="ordered locus">PLES_50511</name>
</gene>
<name>RF1_PSEA8</name>
<accession>B7V0L1</accession>
<proteinExistence type="inferred from homology"/>